<evidence type="ECO:0000255" key="1">
    <source>
        <dbReference type="HAMAP-Rule" id="MF_00042"/>
    </source>
</evidence>
<evidence type="ECO:0000255" key="2">
    <source>
        <dbReference type="PROSITE-ProRule" id="PRU00408"/>
    </source>
</evidence>
<comment type="function">
    <text evidence="1">Endonuclease that specifically degrades the RNA of RNA-DNA hybrids.</text>
</comment>
<comment type="catalytic activity">
    <reaction evidence="1">
        <text>Endonucleolytic cleavage to 5'-phosphomonoester.</text>
        <dbReference type="EC" id="3.1.26.4"/>
    </reaction>
</comment>
<comment type="cofactor">
    <cofactor evidence="1">
        <name>Mg(2+)</name>
        <dbReference type="ChEBI" id="CHEBI:18420"/>
    </cofactor>
    <text evidence="1">Binds 1 Mg(2+) ion per subunit. May bind a second metal ion at a regulatory site, or after substrate binding.</text>
</comment>
<comment type="subunit">
    <text evidence="1">Monomer.</text>
</comment>
<comment type="subcellular location">
    <subcellularLocation>
        <location evidence="1">Cytoplasm</location>
    </subcellularLocation>
</comment>
<comment type="similarity">
    <text evidence="1">Belongs to the RNase H family.</text>
</comment>
<protein>
    <recommendedName>
        <fullName evidence="1">Ribonuclease H</fullName>
        <shortName evidence="1">RNase H</shortName>
        <ecNumber evidence="1">3.1.26.4</ecNumber>
    </recommendedName>
</protein>
<name>RNH_CAMJR</name>
<sequence>MKHIEIYTDGSCLNNPGFGGWAYILRYKEYQKEGFGAEANTTNNRMELMAIIESLKALKEPCEISLFTDSNLMVQSINEWLEGWIKKDFKGKKNIDLWKEYIKVAKSHKIKAFWVKAHNGHLENERCDTLAREAALKIARENDEKH</sequence>
<proteinExistence type="inferred from homology"/>
<accession>Q5HSF7</accession>
<feature type="chain" id="PRO_0000195370" description="Ribonuclease H">
    <location>
        <begin position="1"/>
        <end position="146"/>
    </location>
</feature>
<feature type="domain" description="RNase H type-1" evidence="2">
    <location>
        <begin position="1"/>
        <end position="136"/>
    </location>
</feature>
<feature type="binding site" evidence="1">
    <location>
        <position position="9"/>
    </location>
    <ligand>
        <name>Mg(2+)</name>
        <dbReference type="ChEBI" id="CHEBI:18420"/>
        <label>1</label>
    </ligand>
</feature>
<feature type="binding site" evidence="1">
    <location>
        <position position="9"/>
    </location>
    <ligand>
        <name>Mg(2+)</name>
        <dbReference type="ChEBI" id="CHEBI:18420"/>
        <label>2</label>
    </ligand>
</feature>
<feature type="binding site" evidence="1">
    <location>
        <position position="47"/>
    </location>
    <ligand>
        <name>Mg(2+)</name>
        <dbReference type="ChEBI" id="CHEBI:18420"/>
        <label>1</label>
    </ligand>
</feature>
<feature type="binding site" evidence="1">
    <location>
        <position position="69"/>
    </location>
    <ligand>
        <name>Mg(2+)</name>
        <dbReference type="ChEBI" id="CHEBI:18420"/>
        <label>1</label>
    </ligand>
</feature>
<feature type="binding site" evidence="1">
    <location>
        <position position="128"/>
    </location>
    <ligand>
        <name>Mg(2+)</name>
        <dbReference type="ChEBI" id="CHEBI:18420"/>
        <label>2</label>
    </ligand>
</feature>
<reference key="1">
    <citation type="journal article" date="2005" name="PLoS Biol.">
        <title>Major structural differences and novel potential virulence mechanisms from the genomes of multiple Campylobacter species.</title>
        <authorList>
            <person name="Fouts D.E."/>
            <person name="Mongodin E.F."/>
            <person name="Mandrell R.E."/>
            <person name="Miller W.G."/>
            <person name="Rasko D.A."/>
            <person name="Ravel J."/>
            <person name="Brinkac L.M."/>
            <person name="DeBoy R.T."/>
            <person name="Parker C.T."/>
            <person name="Daugherty S.C."/>
            <person name="Dodson R.J."/>
            <person name="Durkin A.S."/>
            <person name="Madupu R."/>
            <person name="Sullivan S.A."/>
            <person name="Shetty J.U."/>
            <person name="Ayodeji M.A."/>
            <person name="Shvartsbeyn A."/>
            <person name="Schatz M.C."/>
            <person name="Badger J.H."/>
            <person name="Fraser C.M."/>
            <person name="Nelson K.E."/>
        </authorList>
    </citation>
    <scope>NUCLEOTIDE SEQUENCE [LARGE SCALE GENOMIC DNA]</scope>
    <source>
        <strain>RM1221</strain>
    </source>
</reference>
<organism>
    <name type="scientific">Campylobacter jejuni (strain RM1221)</name>
    <dbReference type="NCBI Taxonomy" id="195099"/>
    <lineage>
        <taxon>Bacteria</taxon>
        <taxon>Pseudomonadati</taxon>
        <taxon>Campylobacterota</taxon>
        <taxon>Epsilonproteobacteria</taxon>
        <taxon>Campylobacterales</taxon>
        <taxon>Campylobacteraceae</taxon>
        <taxon>Campylobacter</taxon>
    </lineage>
</organism>
<keyword id="KW-0963">Cytoplasm</keyword>
<keyword id="KW-0255">Endonuclease</keyword>
<keyword id="KW-0378">Hydrolase</keyword>
<keyword id="KW-0460">Magnesium</keyword>
<keyword id="KW-0479">Metal-binding</keyword>
<keyword id="KW-0540">Nuclease</keyword>
<gene>
    <name evidence="1" type="primary">rnhA</name>
    <name type="ordered locus">CJE1808</name>
</gene>
<dbReference type="EC" id="3.1.26.4" evidence="1"/>
<dbReference type="EMBL" id="CP000025">
    <property type="protein sequence ID" value="AAW36230.1"/>
    <property type="molecule type" value="Genomic_DNA"/>
</dbReference>
<dbReference type="RefSeq" id="WP_002851277.1">
    <property type="nucleotide sequence ID" value="NC_003912.7"/>
</dbReference>
<dbReference type="SMR" id="Q5HSF7"/>
<dbReference type="KEGG" id="cjr:CJE1808"/>
<dbReference type="HOGENOM" id="CLU_030894_6_2_7"/>
<dbReference type="GO" id="GO:0005737">
    <property type="term" value="C:cytoplasm"/>
    <property type="evidence" value="ECO:0007669"/>
    <property type="project" value="UniProtKB-SubCell"/>
</dbReference>
<dbReference type="GO" id="GO:0000287">
    <property type="term" value="F:magnesium ion binding"/>
    <property type="evidence" value="ECO:0007669"/>
    <property type="project" value="UniProtKB-UniRule"/>
</dbReference>
<dbReference type="GO" id="GO:0003676">
    <property type="term" value="F:nucleic acid binding"/>
    <property type="evidence" value="ECO:0007669"/>
    <property type="project" value="InterPro"/>
</dbReference>
<dbReference type="GO" id="GO:0004523">
    <property type="term" value="F:RNA-DNA hybrid ribonuclease activity"/>
    <property type="evidence" value="ECO:0007669"/>
    <property type="project" value="UniProtKB-UniRule"/>
</dbReference>
<dbReference type="GO" id="GO:0043137">
    <property type="term" value="P:DNA replication, removal of RNA primer"/>
    <property type="evidence" value="ECO:0007669"/>
    <property type="project" value="TreeGrafter"/>
</dbReference>
<dbReference type="CDD" id="cd09278">
    <property type="entry name" value="RNase_HI_prokaryote_like"/>
    <property type="match status" value="1"/>
</dbReference>
<dbReference type="Gene3D" id="3.30.420.10">
    <property type="entry name" value="Ribonuclease H-like superfamily/Ribonuclease H"/>
    <property type="match status" value="1"/>
</dbReference>
<dbReference type="HAMAP" id="MF_00042">
    <property type="entry name" value="RNase_H"/>
    <property type="match status" value="1"/>
</dbReference>
<dbReference type="InterPro" id="IPR050092">
    <property type="entry name" value="RNase_H"/>
</dbReference>
<dbReference type="InterPro" id="IPR012337">
    <property type="entry name" value="RNaseH-like_sf"/>
</dbReference>
<dbReference type="InterPro" id="IPR002156">
    <property type="entry name" value="RNaseH_domain"/>
</dbReference>
<dbReference type="InterPro" id="IPR036397">
    <property type="entry name" value="RNaseH_sf"/>
</dbReference>
<dbReference type="InterPro" id="IPR022892">
    <property type="entry name" value="RNaseHI"/>
</dbReference>
<dbReference type="NCBIfam" id="NF001236">
    <property type="entry name" value="PRK00203.1"/>
    <property type="match status" value="1"/>
</dbReference>
<dbReference type="PANTHER" id="PTHR10642">
    <property type="entry name" value="RIBONUCLEASE H1"/>
    <property type="match status" value="1"/>
</dbReference>
<dbReference type="PANTHER" id="PTHR10642:SF26">
    <property type="entry name" value="RIBONUCLEASE H1"/>
    <property type="match status" value="1"/>
</dbReference>
<dbReference type="Pfam" id="PF00075">
    <property type="entry name" value="RNase_H"/>
    <property type="match status" value="1"/>
</dbReference>
<dbReference type="SUPFAM" id="SSF53098">
    <property type="entry name" value="Ribonuclease H-like"/>
    <property type="match status" value="1"/>
</dbReference>
<dbReference type="PROSITE" id="PS50879">
    <property type="entry name" value="RNASE_H_1"/>
    <property type="match status" value="1"/>
</dbReference>